<sequence>MSSKGDLSRCRNIGIMAHIDAGKTTTTERILFYTGKQNRIGEVHEGAASMDWMEQERERGITITSAATTCFWNDCRINIIDTPGHVDFTIEVERSLRVLDGAVAVFDGVAGVEPQSETVWRQADKYDVPRICFVNKMDRIGADFYACVDMIKDRLGAVPLVLQLPIGVDKSFVGVVDLVEMRSITWEEDSLGAKFNYGEIPSDLMEKAQDYRARLIESAVEMNDEAMNLYLDGGEISVPLLKSCIRSGVIGAKFVPVLCGSAFKNKGVQPLLDAVVDFLPSPSDIPTIEGASASDPQKAVTIKSSVDDKFVALAFKVMVDRFVGSLTFIRVYSGKLTGKSVVLNSAKGVTESVGRILRMHANNREDISEIQAGDIAALAGLKKTTTGDTLCDQNFPVVLEKMDFPESVMEIAVEPVSTADQEKMGTALSRLVAEDPSLKVCVNSESGQTILKGMGELHLEIIVDRMKREFGVEASVGAPQVAYRETITKSAEIEYVHKKQTGGAGQFAKVNILFEPLPPGSGFEFENKITCGAIPKEYIPGVQSGLELVKETGMIAGFPVIDFKATLFDGAFHEVDSSPLAFELAAKGAFREMANKAGPVLLEPIMRVEIITPDEYMGDVIGDVNSRRGRVAEMQDRHNAKLITAFIPLGKMFGYVKDLRSMSQGRAQYSMYFARYERVPENAVDNVMKK</sequence>
<protein>
    <recommendedName>
        <fullName evidence="1">Elongation factor G</fullName>
        <shortName evidence="1">EF-G</shortName>
    </recommendedName>
</protein>
<reference key="1">
    <citation type="journal article" date="2005" name="Proc. Natl. Acad. Sci. U.S.A.">
        <title>Complete genome sequencing of Anaplasma marginale reveals that the surface is skewed to two superfamilies of outer membrane proteins.</title>
        <authorList>
            <person name="Brayton K.A."/>
            <person name="Kappmeyer L.S."/>
            <person name="Herndon D.R."/>
            <person name="Dark M.J."/>
            <person name="Tibbals D.L."/>
            <person name="Palmer G.H."/>
            <person name="McGuire T.C."/>
            <person name="Knowles D.P. Jr."/>
        </authorList>
    </citation>
    <scope>NUCLEOTIDE SEQUENCE [LARGE SCALE GENOMIC DNA]</scope>
    <source>
        <strain>St. Maries</strain>
    </source>
</reference>
<dbReference type="EMBL" id="CP000030">
    <property type="protein sequence ID" value="AAV86357.1"/>
    <property type="molecule type" value="Genomic_DNA"/>
</dbReference>
<dbReference type="RefSeq" id="WP_010263061.1">
    <property type="nucleotide sequence ID" value="NC_004842.2"/>
</dbReference>
<dbReference type="SMR" id="Q5PBH2"/>
<dbReference type="KEGG" id="ama:AM253"/>
<dbReference type="HOGENOM" id="CLU_002794_4_1_5"/>
<dbReference type="GO" id="GO:0005737">
    <property type="term" value="C:cytoplasm"/>
    <property type="evidence" value="ECO:0007669"/>
    <property type="project" value="UniProtKB-SubCell"/>
</dbReference>
<dbReference type="GO" id="GO:0005525">
    <property type="term" value="F:GTP binding"/>
    <property type="evidence" value="ECO:0007669"/>
    <property type="project" value="UniProtKB-UniRule"/>
</dbReference>
<dbReference type="GO" id="GO:0003924">
    <property type="term" value="F:GTPase activity"/>
    <property type="evidence" value="ECO:0007669"/>
    <property type="project" value="InterPro"/>
</dbReference>
<dbReference type="GO" id="GO:0003746">
    <property type="term" value="F:translation elongation factor activity"/>
    <property type="evidence" value="ECO:0007669"/>
    <property type="project" value="UniProtKB-UniRule"/>
</dbReference>
<dbReference type="GO" id="GO:0032790">
    <property type="term" value="P:ribosome disassembly"/>
    <property type="evidence" value="ECO:0007669"/>
    <property type="project" value="TreeGrafter"/>
</dbReference>
<dbReference type="CDD" id="cd01886">
    <property type="entry name" value="EF-G"/>
    <property type="match status" value="1"/>
</dbReference>
<dbReference type="CDD" id="cd16262">
    <property type="entry name" value="EFG_III"/>
    <property type="match status" value="1"/>
</dbReference>
<dbReference type="CDD" id="cd01434">
    <property type="entry name" value="EFG_mtEFG1_IV"/>
    <property type="match status" value="1"/>
</dbReference>
<dbReference type="CDD" id="cd03713">
    <property type="entry name" value="EFG_mtEFG_C"/>
    <property type="match status" value="1"/>
</dbReference>
<dbReference type="CDD" id="cd04088">
    <property type="entry name" value="EFG_mtEFG_II"/>
    <property type="match status" value="1"/>
</dbReference>
<dbReference type="FunFam" id="2.40.30.10:FF:000006">
    <property type="entry name" value="Elongation factor G"/>
    <property type="match status" value="1"/>
</dbReference>
<dbReference type="FunFam" id="3.30.230.10:FF:000003">
    <property type="entry name" value="Elongation factor G"/>
    <property type="match status" value="1"/>
</dbReference>
<dbReference type="FunFam" id="3.30.70.240:FF:000001">
    <property type="entry name" value="Elongation factor G"/>
    <property type="match status" value="1"/>
</dbReference>
<dbReference type="FunFam" id="3.30.70.870:FF:000001">
    <property type="entry name" value="Elongation factor G"/>
    <property type="match status" value="1"/>
</dbReference>
<dbReference type="FunFam" id="3.40.50.300:FF:000029">
    <property type="entry name" value="Elongation factor G"/>
    <property type="match status" value="1"/>
</dbReference>
<dbReference type="Gene3D" id="3.30.230.10">
    <property type="match status" value="1"/>
</dbReference>
<dbReference type="Gene3D" id="3.30.70.240">
    <property type="match status" value="1"/>
</dbReference>
<dbReference type="Gene3D" id="3.30.70.870">
    <property type="entry name" value="Elongation Factor G (Translational Gtpase), domain 3"/>
    <property type="match status" value="1"/>
</dbReference>
<dbReference type="Gene3D" id="3.40.50.300">
    <property type="entry name" value="P-loop containing nucleotide triphosphate hydrolases"/>
    <property type="match status" value="1"/>
</dbReference>
<dbReference type="Gene3D" id="2.40.30.10">
    <property type="entry name" value="Translation factors"/>
    <property type="match status" value="1"/>
</dbReference>
<dbReference type="HAMAP" id="MF_00054_B">
    <property type="entry name" value="EF_G_EF_2_B"/>
    <property type="match status" value="1"/>
</dbReference>
<dbReference type="InterPro" id="IPR053905">
    <property type="entry name" value="EF-G-like_DII"/>
</dbReference>
<dbReference type="InterPro" id="IPR041095">
    <property type="entry name" value="EFG_II"/>
</dbReference>
<dbReference type="InterPro" id="IPR009022">
    <property type="entry name" value="EFG_III"/>
</dbReference>
<dbReference type="InterPro" id="IPR035647">
    <property type="entry name" value="EFG_III/V"/>
</dbReference>
<dbReference type="InterPro" id="IPR047872">
    <property type="entry name" value="EFG_IV"/>
</dbReference>
<dbReference type="InterPro" id="IPR035649">
    <property type="entry name" value="EFG_V"/>
</dbReference>
<dbReference type="InterPro" id="IPR000640">
    <property type="entry name" value="EFG_V-like"/>
</dbReference>
<dbReference type="InterPro" id="IPR031157">
    <property type="entry name" value="G_TR_CS"/>
</dbReference>
<dbReference type="InterPro" id="IPR027417">
    <property type="entry name" value="P-loop_NTPase"/>
</dbReference>
<dbReference type="InterPro" id="IPR020568">
    <property type="entry name" value="Ribosomal_Su5_D2-typ_SF"/>
</dbReference>
<dbReference type="InterPro" id="IPR014721">
    <property type="entry name" value="Ribsml_uS5_D2-typ_fold_subgr"/>
</dbReference>
<dbReference type="InterPro" id="IPR005225">
    <property type="entry name" value="Small_GTP-bd"/>
</dbReference>
<dbReference type="InterPro" id="IPR000795">
    <property type="entry name" value="T_Tr_GTP-bd_dom"/>
</dbReference>
<dbReference type="InterPro" id="IPR009000">
    <property type="entry name" value="Transl_B-barrel_sf"/>
</dbReference>
<dbReference type="InterPro" id="IPR004540">
    <property type="entry name" value="Transl_elong_EFG/EF2"/>
</dbReference>
<dbReference type="InterPro" id="IPR005517">
    <property type="entry name" value="Transl_elong_EFG/EF2_IV"/>
</dbReference>
<dbReference type="NCBIfam" id="TIGR00484">
    <property type="entry name" value="EF-G"/>
    <property type="match status" value="1"/>
</dbReference>
<dbReference type="NCBIfam" id="NF009381">
    <property type="entry name" value="PRK12740.1-5"/>
    <property type="match status" value="1"/>
</dbReference>
<dbReference type="NCBIfam" id="TIGR00231">
    <property type="entry name" value="small_GTP"/>
    <property type="match status" value="1"/>
</dbReference>
<dbReference type="PANTHER" id="PTHR43261:SF1">
    <property type="entry name" value="RIBOSOME-RELEASING FACTOR 2, MITOCHONDRIAL"/>
    <property type="match status" value="1"/>
</dbReference>
<dbReference type="PANTHER" id="PTHR43261">
    <property type="entry name" value="TRANSLATION ELONGATION FACTOR G-RELATED"/>
    <property type="match status" value="1"/>
</dbReference>
<dbReference type="Pfam" id="PF22042">
    <property type="entry name" value="EF-G_D2"/>
    <property type="match status" value="1"/>
</dbReference>
<dbReference type="Pfam" id="PF00679">
    <property type="entry name" value="EFG_C"/>
    <property type="match status" value="1"/>
</dbReference>
<dbReference type="Pfam" id="PF14492">
    <property type="entry name" value="EFG_III"/>
    <property type="match status" value="1"/>
</dbReference>
<dbReference type="Pfam" id="PF03764">
    <property type="entry name" value="EFG_IV"/>
    <property type="match status" value="1"/>
</dbReference>
<dbReference type="Pfam" id="PF00009">
    <property type="entry name" value="GTP_EFTU"/>
    <property type="match status" value="1"/>
</dbReference>
<dbReference type="PRINTS" id="PR00315">
    <property type="entry name" value="ELONGATNFCT"/>
</dbReference>
<dbReference type="SMART" id="SM00838">
    <property type="entry name" value="EFG_C"/>
    <property type="match status" value="1"/>
</dbReference>
<dbReference type="SMART" id="SM00889">
    <property type="entry name" value="EFG_IV"/>
    <property type="match status" value="1"/>
</dbReference>
<dbReference type="SUPFAM" id="SSF54980">
    <property type="entry name" value="EF-G C-terminal domain-like"/>
    <property type="match status" value="2"/>
</dbReference>
<dbReference type="SUPFAM" id="SSF52540">
    <property type="entry name" value="P-loop containing nucleoside triphosphate hydrolases"/>
    <property type="match status" value="1"/>
</dbReference>
<dbReference type="SUPFAM" id="SSF54211">
    <property type="entry name" value="Ribosomal protein S5 domain 2-like"/>
    <property type="match status" value="1"/>
</dbReference>
<dbReference type="SUPFAM" id="SSF50447">
    <property type="entry name" value="Translation proteins"/>
    <property type="match status" value="1"/>
</dbReference>
<dbReference type="PROSITE" id="PS00301">
    <property type="entry name" value="G_TR_1"/>
    <property type="match status" value="1"/>
</dbReference>
<dbReference type="PROSITE" id="PS51722">
    <property type="entry name" value="G_TR_2"/>
    <property type="match status" value="1"/>
</dbReference>
<keyword id="KW-0963">Cytoplasm</keyword>
<keyword id="KW-0251">Elongation factor</keyword>
<keyword id="KW-0342">GTP-binding</keyword>
<keyword id="KW-0547">Nucleotide-binding</keyword>
<keyword id="KW-0648">Protein biosynthesis</keyword>
<organism>
    <name type="scientific">Anaplasma marginale (strain St. Maries)</name>
    <dbReference type="NCBI Taxonomy" id="234826"/>
    <lineage>
        <taxon>Bacteria</taxon>
        <taxon>Pseudomonadati</taxon>
        <taxon>Pseudomonadota</taxon>
        <taxon>Alphaproteobacteria</taxon>
        <taxon>Rickettsiales</taxon>
        <taxon>Anaplasmataceae</taxon>
        <taxon>Anaplasma</taxon>
    </lineage>
</organism>
<comment type="function">
    <text evidence="1">Catalyzes the GTP-dependent ribosomal translocation step during translation elongation. During this step, the ribosome changes from the pre-translocational (PRE) to the post-translocational (POST) state as the newly formed A-site-bound peptidyl-tRNA and P-site-bound deacylated tRNA move to the P and E sites, respectively. Catalyzes the coordinated movement of the two tRNA molecules, the mRNA and conformational changes in the ribosome.</text>
</comment>
<comment type="subcellular location">
    <subcellularLocation>
        <location evidence="1">Cytoplasm</location>
    </subcellularLocation>
</comment>
<comment type="similarity">
    <text evidence="1">Belongs to the TRAFAC class translation factor GTPase superfamily. Classic translation factor GTPase family. EF-G/EF-2 subfamily.</text>
</comment>
<proteinExistence type="inferred from homology"/>
<feature type="chain" id="PRO_0000091055" description="Elongation factor G">
    <location>
        <begin position="1"/>
        <end position="690"/>
    </location>
</feature>
<feature type="domain" description="tr-type G">
    <location>
        <begin position="8"/>
        <end position="283"/>
    </location>
</feature>
<feature type="binding site" evidence="1">
    <location>
        <begin position="17"/>
        <end position="24"/>
    </location>
    <ligand>
        <name>GTP</name>
        <dbReference type="ChEBI" id="CHEBI:37565"/>
    </ligand>
</feature>
<feature type="binding site" evidence="1">
    <location>
        <begin position="81"/>
        <end position="85"/>
    </location>
    <ligand>
        <name>GTP</name>
        <dbReference type="ChEBI" id="CHEBI:37565"/>
    </ligand>
</feature>
<feature type="binding site" evidence="1">
    <location>
        <begin position="135"/>
        <end position="138"/>
    </location>
    <ligand>
        <name>GTP</name>
        <dbReference type="ChEBI" id="CHEBI:37565"/>
    </ligand>
</feature>
<gene>
    <name evidence="1" type="primary">fusA</name>
    <name type="ordered locus">AM253</name>
</gene>
<evidence type="ECO:0000255" key="1">
    <source>
        <dbReference type="HAMAP-Rule" id="MF_00054"/>
    </source>
</evidence>
<accession>Q5PBH2</accession>
<name>EFG_ANAMM</name>